<organism>
    <name type="scientific">Aggregatibacter actinomycetemcomitans serotype C (strain D11S-1)</name>
    <name type="common">Actinobacillus actinomycetemcomitans</name>
    <dbReference type="NCBI Taxonomy" id="668336"/>
    <lineage>
        <taxon>Bacteria</taxon>
        <taxon>Pseudomonadati</taxon>
        <taxon>Pseudomonadota</taxon>
        <taxon>Gammaproteobacteria</taxon>
        <taxon>Pasteurellales</taxon>
        <taxon>Pasteurellaceae</taxon>
        <taxon>Aggregatibacter</taxon>
    </lineage>
</organism>
<keyword id="KW-0378">Hydrolase</keyword>
<keyword id="KW-0460">Magnesium</keyword>
<keyword id="KW-0479">Metal-binding</keyword>
<keyword id="KW-0574">Periplasm</keyword>
<keyword id="KW-0732">Signal</keyword>
<evidence type="ECO:0000250" key="1">
    <source>
        <dbReference type="UniProtKB" id="P0AE22"/>
    </source>
</evidence>
<evidence type="ECO:0000255" key="2"/>
<evidence type="ECO:0000269" key="3">
    <source>
    </source>
</evidence>
<evidence type="ECO:0000312" key="4">
    <source>
        <dbReference type="EMBL" id="ACX81568.1"/>
    </source>
</evidence>
<name>APHA_AGGAD</name>
<reference evidence="4" key="1">
    <citation type="journal article" date="2009" name="J. Bacteriol.">
        <title>Genome sequence of Aggregatibacter actinomycetemcomitans serotype c strain D11S-1.</title>
        <authorList>
            <person name="Chen C."/>
            <person name="Kittichotirat W."/>
            <person name="Si Y."/>
            <person name="Bumgarner R."/>
        </authorList>
    </citation>
    <scope>NUCLEOTIDE SEQUENCE [LARGE SCALE GENOMIC DNA]</scope>
    <source>
        <strain evidence="3">D11S-1</strain>
    </source>
</reference>
<proteinExistence type="inferred from homology"/>
<dbReference type="EC" id="3.1.3.2" evidence="1"/>
<dbReference type="EMBL" id="CP001733">
    <property type="protein sequence ID" value="ACX81568.1"/>
    <property type="molecule type" value="Genomic_DNA"/>
</dbReference>
<dbReference type="RefSeq" id="WP_012820812.1">
    <property type="nucleotide sequence ID" value="NC_013416.2"/>
</dbReference>
<dbReference type="SMR" id="C9R7B6"/>
<dbReference type="KEGG" id="aat:D11S_0149"/>
<dbReference type="PATRIC" id="fig|668336.12.peg.144"/>
<dbReference type="GO" id="GO:0030288">
    <property type="term" value="C:outer membrane-bounded periplasmic space"/>
    <property type="evidence" value="ECO:0007669"/>
    <property type="project" value="InterPro"/>
</dbReference>
<dbReference type="GO" id="GO:0003993">
    <property type="term" value="F:acid phosphatase activity"/>
    <property type="evidence" value="ECO:0007669"/>
    <property type="project" value="UniProtKB-EC"/>
</dbReference>
<dbReference type="GO" id="GO:0046872">
    <property type="term" value="F:metal ion binding"/>
    <property type="evidence" value="ECO:0007669"/>
    <property type="project" value="UniProtKB-KW"/>
</dbReference>
<dbReference type="CDD" id="cd07499">
    <property type="entry name" value="HAD_CBAP"/>
    <property type="match status" value="1"/>
</dbReference>
<dbReference type="Gene3D" id="3.40.50.1000">
    <property type="entry name" value="HAD superfamily/HAD-like"/>
    <property type="match status" value="1"/>
</dbReference>
<dbReference type="InterPro" id="IPR005519">
    <property type="entry name" value="Acid_phosphat_B-like"/>
</dbReference>
<dbReference type="InterPro" id="IPR036412">
    <property type="entry name" value="HAD-like_sf"/>
</dbReference>
<dbReference type="InterPro" id="IPR010025">
    <property type="entry name" value="HAD-SF_ppase_IIIB_AphA"/>
</dbReference>
<dbReference type="InterPro" id="IPR023214">
    <property type="entry name" value="HAD_sf"/>
</dbReference>
<dbReference type="NCBIfam" id="TIGR01672">
    <property type="entry name" value="AphA"/>
    <property type="match status" value="1"/>
</dbReference>
<dbReference type="Pfam" id="PF03767">
    <property type="entry name" value="Acid_phosphat_B"/>
    <property type="match status" value="1"/>
</dbReference>
<dbReference type="PIRSF" id="PIRSF017818">
    <property type="entry name" value="Acid_Ptase_B"/>
    <property type="match status" value="1"/>
</dbReference>
<dbReference type="SFLD" id="SFLDG01127">
    <property type="entry name" value="C1.3:_Acid_Phosphatase_Like"/>
    <property type="match status" value="1"/>
</dbReference>
<dbReference type="SFLD" id="SFLDS00003">
    <property type="entry name" value="Haloacid_Dehalogenase"/>
    <property type="match status" value="1"/>
</dbReference>
<dbReference type="SUPFAM" id="SSF56784">
    <property type="entry name" value="HAD-like"/>
    <property type="match status" value="1"/>
</dbReference>
<feature type="signal peptide" evidence="2">
    <location>
        <begin position="1"/>
        <end position="22"/>
    </location>
</feature>
<feature type="chain" id="PRO_0000415224" description="Class B acid phosphatase" evidence="2">
    <location>
        <begin position="23"/>
        <end position="235"/>
    </location>
</feature>
<feature type="active site" description="Nucleophile" evidence="1">
    <location>
        <position position="67"/>
    </location>
</feature>
<feature type="active site" description="Proton donor" evidence="1">
    <location>
        <position position="69"/>
    </location>
</feature>
<feature type="binding site" evidence="1">
    <location>
        <position position="67"/>
    </location>
    <ligand>
        <name>Mg(2+)</name>
        <dbReference type="ChEBI" id="CHEBI:18420"/>
    </ligand>
</feature>
<feature type="binding site" evidence="1">
    <location>
        <position position="69"/>
    </location>
    <ligand>
        <name>Mg(2+)</name>
        <dbReference type="ChEBI" id="CHEBI:18420"/>
    </ligand>
</feature>
<feature type="binding site" evidence="1">
    <location>
        <begin position="135"/>
        <end position="136"/>
    </location>
    <ligand>
        <name>substrate</name>
    </ligand>
</feature>
<feature type="binding site" evidence="1">
    <location>
        <position position="175"/>
    </location>
    <ligand>
        <name>substrate</name>
    </ligand>
</feature>
<feature type="binding site" evidence="1">
    <location>
        <position position="190"/>
    </location>
    <ligand>
        <name>Mg(2+)</name>
        <dbReference type="ChEBI" id="CHEBI:18420"/>
    </ligand>
</feature>
<sequence>MKNLVKLSLIAMLTAATLPAMAAKSEPYTHQGTNAREMLVEQPIHWISVDQLKKELEGKAPMNISFDIDETVLFSSPCFYHGQQKYSPGKQDYLKNQDFWNEVNAGCDQYSIPKQIAVDLINMHQERGDQIYFITGRTAEDKDGVTPVLQKAFNIKNMHPVEFMGGRDRTTKYNKTPGIIEHKVTIHYGDSDDDILAAKEAGVRGIRLMRAANSTYQPMPTLGGYGEEVLINSSY</sequence>
<protein>
    <recommendedName>
        <fullName evidence="1">Class B acid phosphatase</fullName>
        <shortName evidence="1">CBAP</shortName>
        <ecNumber evidence="1">3.1.3.2</ecNumber>
    </recommendedName>
</protein>
<comment type="function">
    <text evidence="1">Dephosphorylates several organic phosphate monoesters. Also has a phosphotransferase activity catalyzing the transfer of low-energy phosphate groups from organic phosphate monoesters to free hydroxyl groups of various organic compounds (By similarity).</text>
</comment>
<comment type="catalytic activity">
    <reaction evidence="1">
        <text>a phosphate monoester + H2O = an alcohol + phosphate</text>
        <dbReference type="Rhea" id="RHEA:15017"/>
        <dbReference type="ChEBI" id="CHEBI:15377"/>
        <dbReference type="ChEBI" id="CHEBI:30879"/>
        <dbReference type="ChEBI" id="CHEBI:43474"/>
        <dbReference type="ChEBI" id="CHEBI:67140"/>
        <dbReference type="EC" id="3.1.3.2"/>
    </reaction>
</comment>
<comment type="cofactor">
    <cofactor evidence="1">
        <name>Mg(2+)</name>
        <dbReference type="ChEBI" id="CHEBI:18420"/>
    </cofactor>
    <text evidence="1">Binds 1 Mg(2+) ion per subunit.</text>
</comment>
<comment type="subunit">
    <text evidence="1">Homotetramer.</text>
</comment>
<comment type="subcellular location">
    <subcellularLocation>
        <location evidence="1">Periplasm</location>
    </subcellularLocation>
</comment>
<comment type="similarity">
    <text evidence="1">Belongs to the class B bacterial acid phosphatase family.</text>
</comment>
<gene>
    <name evidence="1" type="primary">aphA</name>
    <name type="ordered locus">D11S_0149</name>
</gene>
<accession>C9R7B6</accession>